<accession>P37142</accession>
<dbReference type="EC" id="2.7.2.4"/>
<dbReference type="EC" id="1.1.1.3"/>
<dbReference type="EMBL" id="L11529">
    <property type="protein sequence ID" value="AAA16972.1"/>
    <property type="molecule type" value="mRNA"/>
</dbReference>
<dbReference type="PIR" id="S35160">
    <property type="entry name" value="S35160"/>
</dbReference>
<dbReference type="SMR" id="P37142"/>
<dbReference type="SABIO-RK" id="P37142"/>
<dbReference type="UniPathway" id="UPA00034">
    <property type="reaction ID" value="UER00015"/>
</dbReference>
<dbReference type="UniPathway" id="UPA00050">
    <property type="reaction ID" value="UER00063"/>
</dbReference>
<dbReference type="UniPathway" id="UPA00050">
    <property type="reaction ID" value="UER00461"/>
</dbReference>
<dbReference type="UniPathway" id="UPA00051">
    <property type="reaction ID" value="UER00462"/>
</dbReference>
<dbReference type="UniPathway" id="UPA00051">
    <property type="reaction ID" value="UER00465"/>
</dbReference>
<dbReference type="GO" id="GO:0009507">
    <property type="term" value="C:chloroplast"/>
    <property type="evidence" value="ECO:0007669"/>
    <property type="project" value="UniProtKB-SubCell"/>
</dbReference>
<dbReference type="GO" id="GO:0004072">
    <property type="term" value="F:aspartate kinase activity"/>
    <property type="evidence" value="ECO:0007669"/>
    <property type="project" value="UniProtKB-EC"/>
</dbReference>
<dbReference type="GO" id="GO:0005524">
    <property type="term" value="F:ATP binding"/>
    <property type="evidence" value="ECO:0007669"/>
    <property type="project" value="UniProtKB-KW"/>
</dbReference>
<dbReference type="GO" id="GO:0004412">
    <property type="term" value="F:homoserine dehydrogenase activity"/>
    <property type="evidence" value="ECO:0000250"/>
    <property type="project" value="UniProtKB"/>
</dbReference>
<dbReference type="GO" id="GO:0046872">
    <property type="term" value="F:metal ion binding"/>
    <property type="evidence" value="ECO:0007669"/>
    <property type="project" value="UniProtKB-KW"/>
</dbReference>
<dbReference type="GO" id="GO:0070403">
    <property type="term" value="F:NAD+ binding"/>
    <property type="evidence" value="ECO:0000250"/>
    <property type="project" value="UniProtKB"/>
</dbReference>
<dbReference type="GO" id="GO:0050661">
    <property type="term" value="F:NADP binding"/>
    <property type="evidence" value="ECO:0007669"/>
    <property type="project" value="InterPro"/>
</dbReference>
<dbReference type="GO" id="GO:0009090">
    <property type="term" value="P:homoserine biosynthetic process"/>
    <property type="evidence" value="ECO:0007669"/>
    <property type="project" value="TreeGrafter"/>
</dbReference>
<dbReference type="GO" id="GO:0009089">
    <property type="term" value="P:lysine biosynthetic process via diaminopimelate"/>
    <property type="evidence" value="ECO:0000250"/>
    <property type="project" value="UniProtKB"/>
</dbReference>
<dbReference type="GO" id="GO:0009086">
    <property type="term" value="P:methionine biosynthetic process"/>
    <property type="evidence" value="ECO:0000250"/>
    <property type="project" value="UniProtKB"/>
</dbReference>
<dbReference type="GO" id="GO:0009088">
    <property type="term" value="P:threonine biosynthetic process"/>
    <property type="evidence" value="ECO:0000250"/>
    <property type="project" value="UniProtKB"/>
</dbReference>
<dbReference type="CDD" id="cd04257">
    <property type="entry name" value="AAK_AK-HSDH"/>
    <property type="match status" value="1"/>
</dbReference>
<dbReference type="CDD" id="cd04921">
    <property type="entry name" value="ACT_AKi-HSDH-ThrA-like_1"/>
    <property type="match status" value="1"/>
</dbReference>
<dbReference type="CDD" id="cd04922">
    <property type="entry name" value="ACT_AKi-HSDH-ThrA_2"/>
    <property type="match status" value="1"/>
</dbReference>
<dbReference type="FunFam" id="3.30.2130.10:FF:000001">
    <property type="entry name" value="Bifunctional aspartokinase/homoserine dehydrogenase"/>
    <property type="match status" value="1"/>
</dbReference>
<dbReference type="FunFam" id="3.30.360.10:FF:000006">
    <property type="entry name" value="Bifunctional aspartokinase/homoserine dehydrogenase"/>
    <property type="match status" value="1"/>
</dbReference>
<dbReference type="FunFam" id="3.40.1160.10:FF:000017">
    <property type="entry name" value="Bifunctional aspartokinase/homoserine dehydrogenase"/>
    <property type="match status" value="1"/>
</dbReference>
<dbReference type="FunFam" id="3.40.50.720:FF:000083">
    <property type="entry name" value="Bifunctional aspartokinase/homoserine dehydrogenase"/>
    <property type="match status" value="1"/>
</dbReference>
<dbReference type="Gene3D" id="3.40.1160.10">
    <property type="entry name" value="Acetylglutamate kinase-like"/>
    <property type="match status" value="1"/>
</dbReference>
<dbReference type="Gene3D" id="3.30.360.10">
    <property type="entry name" value="Dihydrodipicolinate Reductase, domain 2"/>
    <property type="match status" value="1"/>
</dbReference>
<dbReference type="Gene3D" id="3.40.50.720">
    <property type="entry name" value="NAD(P)-binding Rossmann-like Domain"/>
    <property type="match status" value="1"/>
</dbReference>
<dbReference type="Gene3D" id="3.30.2130.10">
    <property type="entry name" value="VC0802-like"/>
    <property type="match status" value="1"/>
</dbReference>
<dbReference type="InterPro" id="IPR036393">
    <property type="entry name" value="AceGlu_kinase-like_sf"/>
</dbReference>
<dbReference type="InterPro" id="IPR045865">
    <property type="entry name" value="ACT-like_dom_sf"/>
</dbReference>
<dbReference type="InterPro" id="IPR054352">
    <property type="entry name" value="ACT_Aspartokinase"/>
</dbReference>
<dbReference type="InterPro" id="IPR002912">
    <property type="entry name" value="ACT_dom"/>
</dbReference>
<dbReference type="InterPro" id="IPR041743">
    <property type="entry name" value="AK-HSDH_N"/>
</dbReference>
<dbReference type="InterPro" id="IPR001048">
    <property type="entry name" value="Asp/Glu/Uridylate_kinase"/>
</dbReference>
<dbReference type="InterPro" id="IPR005106">
    <property type="entry name" value="Asp/hSer_DH_NAD-bd"/>
</dbReference>
<dbReference type="InterPro" id="IPR001341">
    <property type="entry name" value="Asp_kinase"/>
</dbReference>
<dbReference type="InterPro" id="IPR018042">
    <property type="entry name" value="Aspartate_kinase_CS"/>
</dbReference>
<dbReference type="InterPro" id="IPR011147">
    <property type="entry name" value="Bifunc_Aspkin/hSer_DH"/>
</dbReference>
<dbReference type="InterPro" id="IPR001342">
    <property type="entry name" value="HDH_cat"/>
</dbReference>
<dbReference type="InterPro" id="IPR019811">
    <property type="entry name" value="HDH_CS"/>
</dbReference>
<dbReference type="InterPro" id="IPR036291">
    <property type="entry name" value="NAD(P)-bd_dom_sf"/>
</dbReference>
<dbReference type="NCBIfam" id="TIGR00657">
    <property type="entry name" value="asp_kinases"/>
    <property type="match status" value="1"/>
</dbReference>
<dbReference type="NCBIfam" id="NF006959">
    <property type="entry name" value="PRK09436.1"/>
    <property type="match status" value="1"/>
</dbReference>
<dbReference type="NCBIfam" id="NF007003">
    <property type="entry name" value="PRK09466.1"/>
    <property type="match status" value="1"/>
</dbReference>
<dbReference type="PANTHER" id="PTHR43070">
    <property type="match status" value="1"/>
</dbReference>
<dbReference type="PANTHER" id="PTHR43070:SF5">
    <property type="entry name" value="HOMOSERINE DEHYDROGENASE"/>
    <property type="match status" value="1"/>
</dbReference>
<dbReference type="Pfam" id="PF00696">
    <property type="entry name" value="AA_kinase"/>
    <property type="match status" value="1"/>
</dbReference>
<dbReference type="Pfam" id="PF22468">
    <property type="entry name" value="ACT_9"/>
    <property type="match status" value="2"/>
</dbReference>
<dbReference type="Pfam" id="PF00742">
    <property type="entry name" value="Homoserine_dh"/>
    <property type="match status" value="1"/>
</dbReference>
<dbReference type="Pfam" id="PF03447">
    <property type="entry name" value="NAD_binding_3"/>
    <property type="match status" value="1"/>
</dbReference>
<dbReference type="SUPFAM" id="SSF55021">
    <property type="entry name" value="ACT-like"/>
    <property type="match status" value="2"/>
</dbReference>
<dbReference type="SUPFAM" id="SSF53633">
    <property type="entry name" value="Carbamate kinase-like"/>
    <property type="match status" value="1"/>
</dbReference>
<dbReference type="SUPFAM" id="SSF55347">
    <property type="entry name" value="Glyceraldehyde-3-phosphate dehydrogenase-like, C-terminal domain"/>
    <property type="match status" value="1"/>
</dbReference>
<dbReference type="SUPFAM" id="SSF51735">
    <property type="entry name" value="NAD(P)-binding Rossmann-fold domains"/>
    <property type="match status" value="1"/>
</dbReference>
<dbReference type="PROSITE" id="PS51671">
    <property type="entry name" value="ACT"/>
    <property type="match status" value="2"/>
</dbReference>
<dbReference type="PROSITE" id="PS00324">
    <property type="entry name" value="ASPARTOKINASE"/>
    <property type="match status" value="1"/>
</dbReference>
<dbReference type="PROSITE" id="PS01042">
    <property type="entry name" value="HOMOSER_DHGENASE"/>
    <property type="match status" value="1"/>
</dbReference>
<evidence type="ECO:0000250" key="1">
    <source>
        <dbReference type="UniProtKB" id="F9VNG5"/>
    </source>
</evidence>
<evidence type="ECO:0000250" key="2">
    <source>
        <dbReference type="UniProtKB" id="O58802"/>
    </source>
</evidence>
<evidence type="ECO:0000250" key="3">
    <source>
        <dbReference type="UniProtKB" id="P31116"/>
    </source>
</evidence>
<evidence type="ECO:0000250" key="4">
    <source>
        <dbReference type="UniProtKB" id="Q9SA18"/>
    </source>
</evidence>
<evidence type="ECO:0000255" key="5"/>
<evidence type="ECO:0000255" key="6">
    <source>
        <dbReference type="PROSITE-ProRule" id="PRU01007"/>
    </source>
</evidence>
<evidence type="ECO:0000305" key="7"/>
<protein>
    <recommendedName>
        <fullName>Bifunctional aspartokinase/homoserine dehydrogenase, chloroplastic</fullName>
        <shortName>AK-HD</shortName>
        <shortName>AK-HSDH</shortName>
    </recommendedName>
    <domain>
        <recommendedName>
            <fullName>Aspartokinase</fullName>
            <ecNumber>2.7.2.4</ecNumber>
        </recommendedName>
    </domain>
    <domain>
        <recommendedName>
            <fullName>Homoserine dehydrogenase</fullName>
            <ecNumber>1.1.1.3</ecNumber>
        </recommendedName>
    </domain>
</protein>
<organism>
    <name type="scientific">Daucus carota</name>
    <name type="common">Wild carrot</name>
    <dbReference type="NCBI Taxonomy" id="4039"/>
    <lineage>
        <taxon>Eukaryota</taxon>
        <taxon>Viridiplantae</taxon>
        <taxon>Streptophyta</taxon>
        <taxon>Embryophyta</taxon>
        <taxon>Tracheophyta</taxon>
        <taxon>Spermatophyta</taxon>
        <taxon>Magnoliopsida</taxon>
        <taxon>eudicotyledons</taxon>
        <taxon>Gunneridae</taxon>
        <taxon>Pentapetalae</taxon>
        <taxon>asterids</taxon>
        <taxon>campanulids</taxon>
        <taxon>Apiales</taxon>
        <taxon>Apiaceae</taxon>
        <taxon>Apioideae</taxon>
        <taxon>Scandiceae</taxon>
        <taxon>Daucinae</taxon>
        <taxon>Daucus</taxon>
        <taxon>Daucus sect. Daucus</taxon>
    </lineage>
</organism>
<sequence length="921" mass="100226">SLSSAISPSSYAAIAAAYSARTPIFNKKKTAAVLSPLSLFHQSPSLSKTGIFLHRGRKESSSKFYIAASVTTAVPSLDDSVEKVHLPRGAMWSIHKFGGTCVGSSERIRNVAEIVVEDDSERKLVVVSAMSKVTDMMYDLIYKAQSRDDSYESALDAVMEKHKLTAFDLLDEDDLARFLTRLQHDVITLKAMLRAIYIAGHATESFSDFVVGHGELWSAQLLSFVIRKNGGDCNWMDTRDVLVVNPAGSNQVDPDYLESEKRLEKWFSSNQCQTIVATGFIASTPQNIPTTLKRDGSDFSAAIMGALLRAGQVTIWTDVNGVYSADPRKVSEAVVLKTLSYQEAWEMSYFGANVLHPRTINPVMRYDIPIVIRNIFNLSAPGTMICRESVGETEDGLKLESHVKGFATIDNLALINVEGTGMAGVPGTATAIFGAVKDVGANVIMISQASSEHSICFAVPESEVKAVAKALEARFRQALDAGRLSQVANNPNCSILATVGQKMASTPGVSATLFNALAKANINVRAIAQGCTEYNITVVLSREDCVRALKAVHSRFYLSRTTIAVGIVGPGLIGATLLDQLRDQAAILKENSKIDLRVMGITGSRTMLLSETGIDLSRWREVQKEKGQTAGLEKFVQHVRGNHFIPSTVIVDCTADSEVASHYHDWLCRGIHVITPNKKANSGPLDQYLKLRALQRRSYTHYFYEATVVAGLPIITTLQGLLETGDKILRIEGIFSGTLSYIFNNFKSTTPFSEVVSEAKAAGYTEPDPRDDLAGTDVARKVIILARGSGLKLELSDIPVQSLVPEPLRGIASAEEFLLQLPQFDSDMTRKREDAENAGEVLRYVGVVDAVNQKGVVELKRYKKEHPFAQLSGSDNINAFTTERYNKQPPIIRGPGAGAEVTAGGVFSDILRLASYLGAPS</sequence>
<proteinExistence type="evidence at protein level"/>
<feature type="transit peptide" description="Chloroplast">
    <location>
        <begin position="1" status="less than"/>
        <end position="87"/>
    </location>
</feature>
<feature type="chain" id="PRO_0000002391" description="Bifunctional aspartokinase/homoserine dehydrogenase, chloroplastic">
    <location>
        <begin position="88"/>
        <end position="921"/>
    </location>
</feature>
<feature type="domain" description="ACT 1" evidence="6">
    <location>
        <begin position="417"/>
        <end position="489"/>
    </location>
</feature>
<feature type="domain" description="ACT 2" evidence="6">
    <location>
        <begin position="498"/>
        <end position="575"/>
    </location>
</feature>
<feature type="region of interest" description="Aspartokinase">
    <location>
        <begin position="88"/>
        <end position="339"/>
    </location>
</feature>
<feature type="region of interest" description="Interface">
    <location>
        <begin position="340"/>
        <end position="567"/>
    </location>
</feature>
<feature type="region of interest" description="Homoserine dehydrogenase">
    <location>
        <begin position="568"/>
        <end position="921"/>
    </location>
</feature>
<feature type="active site" description="Proton donor" evidence="5">
    <location>
        <position position="781"/>
    </location>
</feature>
<feature type="binding site" evidence="3">
    <location>
        <position position="573"/>
    </location>
    <ligand>
        <name>NAD(+)</name>
        <dbReference type="ChEBI" id="CHEBI:57540"/>
    </ligand>
</feature>
<feature type="binding site" evidence="1">
    <location>
        <position position="573"/>
    </location>
    <ligand>
        <name>NADP(+)</name>
        <dbReference type="ChEBI" id="CHEBI:58349"/>
    </ligand>
</feature>
<feature type="binding site" evidence="2">
    <location>
        <position position="573"/>
    </location>
    <ligand>
        <name>NADPH</name>
        <dbReference type="ChEBI" id="CHEBI:57783"/>
    </ligand>
</feature>
<feature type="binding site" evidence="1">
    <location>
        <position position="605"/>
    </location>
    <ligand>
        <name>NADP(+)</name>
        <dbReference type="ChEBI" id="CHEBI:58349"/>
    </ligand>
</feature>
<feature type="binding site" evidence="3">
    <location>
        <position position="654"/>
    </location>
    <ligand>
        <name>NAD(+)</name>
        <dbReference type="ChEBI" id="CHEBI:57540"/>
    </ligand>
</feature>
<feature type="binding site" evidence="1">
    <location>
        <position position="654"/>
    </location>
    <ligand>
        <name>NADP(+)</name>
        <dbReference type="ChEBI" id="CHEBI:58349"/>
    </ligand>
</feature>
<feature type="binding site" evidence="2">
    <location>
        <position position="654"/>
    </location>
    <ligand>
        <name>NADPH</name>
        <dbReference type="ChEBI" id="CHEBI:57783"/>
    </ligand>
</feature>
<feature type="binding site" evidence="1">
    <location>
        <position position="678"/>
    </location>
    <ligand>
        <name>NADP(+)</name>
        <dbReference type="ChEBI" id="CHEBI:58349"/>
    </ligand>
</feature>
<feature type="binding site" evidence="2">
    <location>
        <position position="678"/>
    </location>
    <ligand>
        <name>NADPH</name>
        <dbReference type="ChEBI" id="CHEBI:57783"/>
    </ligand>
</feature>
<feature type="binding site" evidence="3">
    <location>
        <position position="705"/>
    </location>
    <ligand>
        <name>Na(+)</name>
        <dbReference type="ChEBI" id="CHEBI:29101"/>
    </ligand>
</feature>
<feature type="binding site" evidence="3">
    <location>
        <position position="708"/>
    </location>
    <ligand>
        <name>Na(+)</name>
        <dbReference type="ChEBI" id="CHEBI:29101"/>
    </ligand>
</feature>
<feature type="binding site" evidence="3">
    <location>
        <position position="710"/>
    </location>
    <ligand>
        <name>Na(+)</name>
        <dbReference type="ChEBI" id="CHEBI:29101"/>
    </ligand>
</feature>
<feature type="binding site" evidence="3">
    <location>
        <position position="712"/>
    </location>
    <ligand>
        <name>Na(+)</name>
        <dbReference type="ChEBI" id="CHEBI:29101"/>
    </ligand>
</feature>
<feature type="binding site" evidence="1">
    <location>
        <position position="763"/>
    </location>
    <ligand>
        <name>NADP(+)</name>
        <dbReference type="ChEBI" id="CHEBI:58349"/>
    </ligand>
</feature>
<feature type="binding site" evidence="3">
    <location>
        <position position="766"/>
    </location>
    <ligand>
        <name>L-homoserine</name>
        <dbReference type="ChEBI" id="CHEBI:57476"/>
    </ligand>
</feature>
<feature type="binding site" evidence="1">
    <location>
        <position position="766"/>
    </location>
    <ligand>
        <name>NADP(+)</name>
        <dbReference type="ChEBI" id="CHEBI:58349"/>
    </ligand>
</feature>
<feature type="binding site" evidence="3">
    <location>
        <position position="777"/>
    </location>
    <ligand>
        <name>L-homoserine</name>
        <dbReference type="ChEBI" id="CHEBI:57476"/>
    </ligand>
</feature>
<feature type="binding site" evidence="3">
    <location>
        <position position="898"/>
    </location>
    <ligand>
        <name>NAD(+)</name>
        <dbReference type="ChEBI" id="CHEBI:57540"/>
    </ligand>
</feature>
<feature type="binding site" evidence="1">
    <location>
        <position position="898"/>
    </location>
    <ligand>
        <name>NADP(+)</name>
        <dbReference type="ChEBI" id="CHEBI:58349"/>
    </ligand>
</feature>
<feature type="binding site" evidence="2">
    <location>
        <position position="898"/>
    </location>
    <ligand>
        <name>NADPH</name>
        <dbReference type="ChEBI" id="CHEBI:57783"/>
    </ligand>
</feature>
<feature type="non-terminal residue">
    <location>
        <position position="1"/>
    </location>
</feature>
<reference key="1">
    <citation type="journal article" date="1993" name="Plant Mol. Biol.">
        <title>Identification and expression of a cDNA from Daucus carota encoding a bifunctional aspartokinase-homoserine dehydrogenase.</title>
        <authorList>
            <person name="Weisemann J.M."/>
            <person name="Matthews B.F."/>
        </authorList>
    </citation>
    <scope>NUCLEOTIDE SEQUENCE [MRNA]</scope>
    <scope>PARTIAL PROTEIN SEQUENCE</scope>
</reference>
<comment type="function">
    <text evidence="4">Bifunctional aspartate kinase and homoserine dehydrogenase that catalyzes the first and the third steps toward the synthesis of lysine, methionine and threonine from aspartate.</text>
</comment>
<comment type="catalytic activity">
    <reaction evidence="4">
        <text>L-homoserine + NADP(+) = L-aspartate 4-semialdehyde + NADPH + H(+)</text>
        <dbReference type="Rhea" id="RHEA:15761"/>
        <dbReference type="ChEBI" id="CHEBI:15378"/>
        <dbReference type="ChEBI" id="CHEBI:57476"/>
        <dbReference type="ChEBI" id="CHEBI:57783"/>
        <dbReference type="ChEBI" id="CHEBI:58349"/>
        <dbReference type="ChEBI" id="CHEBI:537519"/>
        <dbReference type="EC" id="1.1.1.3"/>
    </reaction>
    <physiologicalReaction direction="right-to-left" evidence="4">
        <dbReference type="Rhea" id="RHEA:15763"/>
    </physiologicalReaction>
</comment>
<comment type="catalytic activity">
    <reaction evidence="4">
        <text>L-homoserine + NAD(+) = L-aspartate 4-semialdehyde + NADH + H(+)</text>
        <dbReference type="Rhea" id="RHEA:15757"/>
        <dbReference type="ChEBI" id="CHEBI:15378"/>
        <dbReference type="ChEBI" id="CHEBI:57476"/>
        <dbReference type="ChEBI" id="CHEBI:57540"/>
        <dbReference type="ChEBI" id="CHEBI:57945"/>
        <dbReference type="ChEBI" id="CHEBI:537519"/>
        <dbReference type="EC" id="1.1.1.3"/>
    </reaction>
    <physiologicalReaction direction="right-to-left" evidence="4">
        <dbReference type="Rhea" id="RHEA:15759"/>
    </physiologicalReaction>
</comment>
<comment type="catalytic activity">
    <reaction evidence="4">
        <text>L-aspartate + ATP = 4-phospho-L-aspartate + ADP</text>
        <dbReference type="Rhea" id="RHEA:23776"/>
        <dbReference type="ChEBI" id="CHEBI:29991"/>
        <dbReference type="ChEBI" id="CHEBI:30616"/>
        <dbReference type="ChEBI" id="CHEBI:57535"/>
        <dbReference type="ChEBI" id="CHEBI:456216"/>
        <dbReference type="EC" id="2.7.2.4"/>
    </reaction>
    <physiologicalReaction direction="left-to-right" evidence="4">
        <dbReference type="Rhea" id="RHEA:23777"/>
    </physiologicalReaction>
</comment>
<comment type="cofactor">
    <cofactor evidence="3">
        <name>a metal cation</name>
        <dbReference type="ChEBI" id="CHEBI:25213"/>
    </cofactor>
    <text evidence="3">A sodium ion is seen in the structure; a metal ion may subtly affect the relative position of the nucleotide-binding region to influence enzyme activity, and could increase the stability of the enzyme.</text>
</comment>
<comment type="pathway">
    <text evidence="4">Amino-acid biosynthesis; L-lysine biosynthesis via DAP pathway; (S)-tetrahydrodipicolinate from L-aspartate: step 1/4.</text>
</comment>
<comment type="pathway">
    <text evidence="4">Amino-acid biosynthesis; L-methionine biosynthesis via de novo pathway; L-homoserine from L-aspartate: step 1/3.</text>
</comment>
<comment type="pathway">
    <text evidence="4">Amino-acid biosynthesis; L-methionine biosynthesis via de novo pathway; L-homoserine from L-aspartate: step 3/3.</text>
</comment>
<comment type="pathway">
    <text evidence="4">Amino-acid biosynthesis; L-threonine biosynthesis; L-threonine from L-aspartate: step 1/5.</text>
</comment>
<comment type="pathway">
    <text evidence="4">Amino-acid biosynthesis; L-threonine biosynthesis; L-threonine from L-aspartate: step 3/5.</text>
</comment>
<comment type="subcellular location">
    <subcellularLocation>
        <location>Plastid</location>
        <location>Chloroplast</location>
    </subcellularLocation>
</comment>
<comment type="similarity">
    <text evidence="7">In the N-terminal section; belongs to the aspartokinase family.</text>
</comment>
<comment type="similarity">
    <text evidence="7">In the C-terminal section; belongs to the homoserine dehydrogenase family.</text>
</comment>
<keyword id="KW-0028">Amino-acid biosynthesis</keyword>
<keyword id="KW-0067">ATP-binding</keyword>
<keyword id="KW-0150">Chloroplast</keyword>
<keyword id="KW-0903">Direct protein sequencing</keyword>
<keyword id="KW-0418">Kinase</keyword>
<keyword id="KW-0457">Lysine biosynthesis</keyword>
<keyword id="KW-0479">Metal-binding</keyword>
<keyword id="KW-0486">Methionine biosynthesis</keyword>
<keyword id="KW-0511">Multifunctional enzyme</keyword>
<keyword id="KW-0520">NAD</keyword>
<keyword id="KW-0521">NADP</keyword>
<keyword id="KW-0547">Nucleotide-binding</keyword>
<keyword id="KW-0560">Oxidoreductase</keyword>
<keyword id="KW-0934">Plastid</keyword>
<keyword id="KW-0677">Repeat</keyword>
<keyword id="KW-0915">Sodium</keyword>
<keyword id="KW-0791">Threonine biosynthesis</keyword>
<keyword id="KW-0808">Transferase</keyword>
<keyword id="KW-0809">Transit peptide</keyword>
<name>AKH_DAUCA</name>